<comment type="function">
    <text evidence="1">Modulates RecA activity.</text>
</comment>
<comment type="subcellular location">
    <subcellularLocation>
        <location evidence="1">Cytoplasm</location>
    </subcellularLocation>
</comment>
<comment type="similarity">
    <text evidence="1">Belongs to the RecX family.</text>
</comment>
<sequence>MTASCPPPSTSEPSREEQARALCLRLLTARARTRAELHGRLAKRGYPDDVSTAVLDRLAAVGLIDDADFAQQWVQSRRAHAGKSKRALAAELHTKGVDNDVITSVLAGIDAGAERDRAEQLVRSKLRRETLAQDDARVTRRLVGMLARRGYSQNLACEVVLAELAAERERRRV</sequence>
<protein>
    <recommendedName>
        <fullName evidence="1">Regulatory protein RecX</fullName>
    </recommendedName>
</protein>
<proteinExistence type="inferred from homology"/>
<evidence type="ECO:0000255" key="1">
    <source>
        <dbReference type="HAMAP-Rule" id="MF_01114"/>
    </source>
</evidence>
<keyword id="KW-0963">Cytoplasm</keyword>
<name>RECX_MYCA1</name>
<feature type="chain" id="PRO_1000065187" description="Regulatory protein RecX">
    <location>
        <begin position="1"/>
        <end position="173"/>
    </location>
</feature>
<dbReference type="EMBL" id="CP000479">
    <property type="protein sequence ID" value="ABK64438.1"/>
    <property type="molecule type" value="Genomic_DNA"/>
</dbReference>
<dbReference type="RefSeq" id="WP_011725579.1">
    <property type="nucleotide sequence ID" value="NC_008595.1"/>
</dbReference>
<dbReference type="SMR" id="A0QIR5"/>
<dbReference type="KEGG" id="mav:MAV_3626"/>
<dbReference type="HOGENOM" id="CLU_066607_0_2_11"/>
<dbReference type="Proteomes" id="UP000001574">
    <property type="component" value="Chromosome"/>
</dbReference>
<dbReference type="GO" id="GO:0005737">
    <property type="term" value="C:cytoplasm"/>
    <property type="evidence" value="ECO:0007669"/>
    <property type="project" value="UniProtKB-SubCell"/>
</dbReference>
<dbReference type="GO" id="GO:0006282">
    <property type="term" value="P:regulation of DNA repair"/>
    <property type="evidence" value="ECO:0007669"/>
    <property type="project" value="UniProtKB-UniRule"/>
</dbReference>
<dbReference type="Gene3D" id="1.10.10.10">
    <property type="entry name" value="Winged helix-like DNA-binding domain superfamily/Winged helix DNA-binding domain"/>
    <property type="match status" value="2"/>
</dbReference>
<dbReference type="HAMAP" id="MF_01114">
    <property type="entry name" value="RecX"/>
    <property type="match status" value="1"/>
</dbReference>
<dbReference type="InterPro" id="IPR053926">
    <property type="entry name" value="RecX_HTH_1st"/>
</dbReference>
<dbReference type="InterPro" id="IPR053924">
    <property type="entry name" value="RecX_HTH_2nd"/>
</dbReference>
<dbReference type="InterPro" id="IPR003783">
    <property type="entry name" value="Regulatory_RecX"/>
</dbReference>
<dbReference type="InterPro" id="IPR036388">
    <property type="entry name" value="WH-like_DNA-bd_sf"/>
</dbReference>
<dbReference type="NCBIfam" id="NF001056">
    <property type="entry name" value="PRK00117.3-1"/>
    <property type="match status" value="1"/>
</dbReference>
<dbReference type="PANTHER" id="PTHR33602">
    <property type="entry name" value="REGULATORY PROTEIN RECX FAMILY PROTEIN"/>
    <property type="match status" value="1"/>
</dbReference>
<dbReference type="PANTHER" id="PTHR33602:SF1">
    <property type="entry name" value="REGULATORY PROTEIN RECX FAMILY PROTEIN"/>
    <property type="match status" value="1"/>
</dbReference>
<dbReference type="Pfam" id="PF21982">
    <property type="entry name" value="RecX_HTH1"/>
    <property type="match status" value="1"/>
</dbReference>
<dbReference type="Pfam" id="PF02631">
    <property type="entry name" value="RecX_HTH2"/>
    <property type="match status" value="1"/>
</dbReference>
<organism>
    <name type="scientific">Mycobacterium avium (strain 104)</name>
    <dbReference type="NCBI Taxonomy" id="243243"/>
    <lineage>
        <taxon>Bacteria</taxon>
        <taxon>Bacillati</taxon>
        <taxon>Actinomycetota</taxon>
        <taxon>Actinomycetes</taxon>
        <taxon>Mycobacteriales</taxon>
        <taxon>Mycobacteriaceae</taxon>
        <taxon>Mycobacterium</taxon>
        <taxon>Mycobacterium avium complex (MAC)</taxon>
    </lineage>
</organism>
<accession>A0QIR5</accession>
<reference key="1">
    <citation type="submission" date="2006-10" db="EMBL/GenBank/DDBJ databases">
        <authorList>
            <person name="Fleischmann R.D."/>
            <person name="Dodson R.J."/>
            <person name="Haft D.H."/>
            <person name="Merkel J.S."/>
            <person name="Nelson W.C."/>
            <person name="Fraser C.M."/>
        </authorList>
    </citation>
    <scope>NUCLEOTIDE SEQUENCE [LARGE SCALE GENOMIC DNA]</scope>
    <source>
        <strain>104</strain>
    </source>
</reference>
<gene>
    <name evidence="1" type="primary">recX</name>
    <name type="ordered locus">MAV_3626</name>
</gene>